<protein>
    <recommendedName>
        <fullName>Beta-catenin-interacting protein 1</fullName>
    </recommendedName>
    <alternativeName>
        <fullName>Inhibitor of beta-catenin and Tcf-4</fullName>
    </alternativeName>
</protein>
<feature type="chain" id="PRO_0000152882" description="Beta-catenin-interacting protein 1">
    <location>
        <begin position="1"/>
        <end position="81"/>
    </location>
</feature>
<feature type="modified residue" description="Phosphoserine" evidence="2">
    <location>
        <position position="59"/>
    </location>
</feature>
<feature type="helix" evidence="6">
    <location>
        <begin position="11"/>
        <end position="28"/>
    </location>
</feature>
<feature type="helix" evidence="6">
    <location>
        <begin position="35"/>
        <end position="43"/>
    </location>
</feature>
<feature type="helix" evidence="6">
    <location>
        <begin position="45"/>
        <end position="52"/>
    </location>
</feature>
<dbReference type="EMBL" id="AB021262">
    <property type="protein sequence ID" value="BAB03458.1"/>
    <property type="molecule type" value="mRNA"/>
</dbReference>
<dbReference type="EMBL" id="AL357140">
    <property type="status" value="NOT_ANNOTATED_CDS"/>
    <property type="molecule type" value="Genomic_DNA"/>
</dbReference>
<dbReference type="EMBL" id="CH471130">
    <property type="protein sequence ID" value="EAW71631.1"/>
    <property type="molecule type" value="Genomic_DNA"/>
</dbReference>
<dbReference type="EMBL" id="BC014300">
    <property type="protein sequence ID" value="AAH14300.1"/>
    <property type="molecule type" value="mRNA"/>
</dbReference>
<dbReference type="EMBL" id="BC146892">
    <property type="protein sequence ID" value="AAI46893.1"/>
    <property type="molecule type" value="mRNA"/>
</dbReference>
<dbReference type="EMBL" id="BC146896">
    <property type="protein sequence ID" value="AAI46897.1"/>
    <property type="molecule type" value="mRNA"/>
</dbReference>
<dbReference type="CCDS" id="CCDS106.1"/>
<dbReference type="RefSeq" id="NP_001012329.1">
    <property type="nucleotide sequence ID" value="NM_001012329.2"/>
</dbReference>
<dbReference type="RefSeq" id="NP_064633.1">
    <property type="nucleotide sequence ID" value="NM_020248.3"/>
</dbReference>
<dbReference type="RefSeq" id="XP_016857342.1">
    <property type="nucleotide sequence ID" value="XM_017001853.1"/>
</dbReference>
<dbReference type="RefSeq" id="XP_016857343.1">
    <property type="nucleotide sequence ID" value="XM_017001854.1"/>
</dbReference>
<dbReference type="RefSeq" id="XP_016857344.1">
    <property type="nucleotide sequence ID" value="XM_017001855.1"/>
</dbReference>
<dbReference type="RefSeq" id="XP_047281726.1">
    <property type="nucleotide sequence ID" value="XM_047425770.1"/>
</dbReference>
<dbReference type="RefSeq" id="XP_054193755.1">
    <property type="nucleotide sequence ID" value="XM_054337780.1"/>
</dbReference>
<dbReference type="RefSeq" id="XP_054193756.1">
    <property type="nucleotide sequence ID" value="XM_054337781.1"/>
</dbReference>
<dbReference type="RefSeq" id="XP_054193757.1">
    <property type="nucleotide sequence ID" value="XM_054337782.1"/>
</dbReference>
<dbReference type="PDB" id="1LUJ">
    <property type="method" value="X-ray"/>
    <property type="resolution" value="2.50 A"/>
    <property type="chains" value="B=1-75"/>
</dbReference>
<dbReference type="PDB" id="1M1E">
    <property type="method" value="X-ray"/>
    <property type="resolution" value="2.10 A"/>
    <property type="chains" value="B=1-81"/>
</dbReference>
<dbReference type="PDB" id="1T08">
    <property type="method" value="X-ray"/>
    <property type="resolution" value="2.10 A"/>
    <property type="chains" value="B=8-53"/>
</dbReference>
<dbReference type="PDBsum" id="1LUJ"/>
<dbReference type="PDBsum" id="1M1E"/>
<dbReference type="PDBsum" id="1T08"/>
<dbReference type="SMR" id="Q9NSA3"/>
<dbReference type="BioGRID" id="121313">
    <property type="interactions" value="44"/>
</dbReference>
<dbReference type="CORUM" id="Q9NSA3"/>
<dbReference type="FunCoup" id="Q9NSA3">
    <property type="interactions" value="1002"/>
</dbReference>
<dbReference type="IntAct" id="Q9NSA3">
    <property type="interactions" value="30"/>
</dbReference>
<dbReference type="MINT" id="Q9NSA3"/>
<dbReference type="STRING" id="9606.ENSP00000366474"/>
<dbReference type="BindingDB" id="Q9NSA3"/>
<dbReference type="ChEMBL" id="CHEMBL4523468"/>
<dbReference type="GlyGen" id="Q9NSA3">
    <property type="glycosylation" value="1 site, 1 N-linked glycan (1 site)"/>
</dbReference>
<dbReference type="iPTMnet" id="Q9NSA3"/>
<dbReference type="MetOSite" id="Q9NSA3"/>
<dbReference type="PhosphoSitePlus" id="Q9NSA3"/>
<dbReference type="BioMuta" id="CTNNBIP1"/>
<dbReference type="DMDM" id="29428025"/>
<dbReference type="jPOST" id="Q9NSA3"/>
<dbReference type="MassIVE" id="Q9NSA3"/>
<dbReference type="PaxDb" id="9606-ENSP00000366474"/>
<dbReference type="PeptideAtlas" id="Q9NSA3"/>
<dbReference type="ProteomicsDB" id="82522"/>
<dbReference type="Pumba" id="Q9NSA3"/>
<dbReference type="TopDownProteomics" id="Q9NSA3"/>
<dbReference type="Antibodypedia" id="27763">
    <property type="antibodies" value="184 antibodies from 24 providers"/>
</dbReference>
<dbReference type="DNASU" id="56998"/>
<dbReference type="Ensembl" id="ENST00000377256.1">
    <property type="protein sequence ID" value="ENSP00000366466.1"/>
    <property type="gene ID" value="ENSG00000178585.15"/>
</dbReference>
<dbReference type="Ensembl" id="ENST00000377258.5">
    <property type="protein sequence ID" value="ENSP00000366468.1"/>
    <property type="gene ID" value="ENSG00000178585.15"/>
</dbReference>
<dbReference type="Ensembl" id="ENST00000377263.6">
    <property type="protein sequence ID" value="ENSP00000366474.1"/>
    <property type="gene ID" value="ENSG00000178585.15"/>
</dbReference>
<dbReference type="Ensembl" id="ENST00000400904.7">
    <property type="protein sequence ID" value="ENSP00000383696.3"/>
    <property type="gene ID" value="ENSG00000178585.15"/>
</dbReference>
<dbReference type="GeneID" id="56998"/>
<dbReference type="KEGG" id="hsa:56998"/>
<dbReference type="MANE-Select" id="ENST00000377263.6">
    <property type="protein sequence ID" value="ENSP00000366474.1"/>
    <property type="RefSeq nucleotide sequence ID" value="NM_020248.3"/>
    <property type="RefSeq protein sequence ID" value="NP_064633.1"/>
</dbReference>
<dbReference type="UCSC" id="uc001aqk.2">
    <property type="organism name" value="human"/>
</dbReference>
<dbReference type="AGR" id="HGNC:16913"/>
<dbReference type="CTD" id="56998"/>
<dbReference type="DisGeNET" id="56998"/>
<dbReference type="GeneCards" id="CTNNBIP1"/>
<dbReference type="HGNC" id="HGNC:16913">
    <property type="gene designation" value="CTNNBIP1"/>
</dbReference>
<dbReference type="HPA" id="ENSG00000178585">
    <property type="expression patterns" value="Tissue enhanced (esophagus, skin)"/>
</dbReference>
<dbReference type="MIM" id="607758">
    <property type="type" value="gene"/>
</dbReference>
<dbReference type="neXtProt" id="NX_Q9NSA3"/>
<dbReference type="OpenTargets" id="ENSG00000178585"/>
<dbReference type="PharmGKB" id="PA27014"/>
<dbReference type="VEuPathDB" id="HostDB:ENSG00000178585"/>
<dbReference type="eggNOG" id="ENOG502S3XR">
    <property type="taxonomic scope" value="Eukaryota"/>
</dbReference>
<dbReference type="GeneTree" id="ENSGT00940000161133"/>
<dbReference type="HOGENOM" id="CLU_145119_1_0_1"/>
<dbReference type="InParanoid" id="Q9NSA3"/>
<dbReference type="OMA" id="MNCEGAS"/>
<dbReference type="OrthoDB" id="9926449at2759"/>
<dbReference type="PAN-GO" id="Q9NSA3">
    <property type="GO annotations" value="5 GO annotations based on evolutionary models"/>
</dbReference>
<dbReference type="PhylomeDB" id="Q9NSA3"/>
<dbReference type="PathwayCommons" id="Q9NSA3"/>
<dbReference type="Reactome" id="R-HSA-3769402">
    <property type="pathway name" value="Deactivation of the beta-catenin transactivating complex"/>
</dbReference>
<dbReference type="SignaLink" id="Q9NSA3"/>
<dbReference type="SIGNOR" id="Q9NSA3"/>
<dbReference type="BioGRID-ORCS" id="56998">
    <property type="hits" value="34 hits in 1163 CRISPR screens"/>
</dbReference>
<dbReference type="ChiTaRS" id="CTNNBIP1">
    <property type="organism name" value="human"/>
</dbReference>
<dbReference type="EvolutionaryTrace" id="Q9NSA3"/>
<dbReference type="GeneWiki" id="CTNNBIP1"/>
<dbReference type="GenomeRNAi" id="56998"/>
<dbReference type="Pharos" id="Q9NSA3">
    <property type="development level" value="Tbio"/>
</dbReference>
<dbReference type="PRO" id="PR:Q9NSA3"/>
<dbReference type="Proteomes" id="UP000005640">
    <property type="component" value="Chromosome 1"/>
</dbReference>
<dbReference type="RNAct" id="Q9NSA3">
    <property type="molecule type" value="protein"/>
</dbReference>
<dbReference type="Bgee" id="ENSG00000178585">
    <property type="expression patterns" value="Expressed in skin of leg and 199 other cell types or tissues"/>
</dbReference>
<dbReference type="ExpressionAtlas" id="Q9NSA3">
    <property type="expression patterns" value="baseline and differential"/>
</dbReference>
<dbReference type="GO" id="GO:0030877">
    <property type="term" value="C:beta-catenin destruction complex"/>
    <property type="evidence" value="ECO:0000314"/>
    <property type="project" value="BHF-UCL"/>
</dbReference>
<dbReference type="GO" id="GO:1990711">
    <property type="term" value="C:beta-catenin-ICAT complex"/>
    <property type="evidence" value="ECO:0007669"/>
    <property type="project" value="Ensembl"/>
</dbReference>
<dbReference type="GO" id="GO:0005737">
    <property type="term" value="C:cytoplasm"/>
    <property type="evidence" value="ECO:0000314"/>
    <property type="project" value="BHF-UCL"/>
</dbReference>
<dbReference type="GO" id="GO:0005829">
    <property type="term" value="C:cytosol"/>
    <property type="evidence" value="ECO:0000314"/>
    <property type="project" value="BHF-UCL"/>
</dbReference>
<dbReference type="GO" id="GO:0005654">
    <property type="term" value="C:nucleoplasm"/>
    <property type="evidence" value="ECO:0000304"/>
    <property type="project" value="Reactome"/>
</dbReference>
<dbReference type="GO" id="GO:0005634">
    <property type="term" value="C:nucleus"/>
    <property type="evidence" value="ECO:0000314"/>
    <property type="project" value="BHF-UCL"/>
</dbReference>
<dbReference type="GO" id="GO:0070016">
    <property type="term" value="F:armadillo repeat domain binding"/>
    <property type="evidence" value="ECO:0000353"/>
    <property type="project" value="BHF-UCL"/>
</dbReference>
<dbReference type="GO" id="GO:0008013">
    <property type="term" value="F:beta-catenin binding"/>
    <property type="evidence" value="ECO:0000353"/>
    <property type="project" value="BHF-UCL"/>
</dbReference>
<dbReference type="GO" id="GO:0001223">
    <property type="term" value="F:transcription coactivator binding"/>
    <property type="evidence" value="ECO:0000353"/>
    <property type="project" value="BHF-UCL"/>
</dbReference>
<dbReference type="GO" id="GO:0140416">
    <property type="term" value="F:transcription regulator inhibitor activity"/>
    <property type="evidence" value="ECO:0000314"/>
    <property type="project" value="BHF-UCL"/>
</dbReference>
<dbReference type="GO" id="GO:0009952">
    <property type="term" value="P:anterior/posterior pattern specification"/>
    <property type="evidence" value="ECO:0007669"/>
    <property type="project" value="Ensembl"/>
</dbReference>
<dbReference type="GO" id="GO:0001658">
    <property type="term" value="P:branching involved in ureteric bud morphogenesis"/>
    <property type="evidence" value="ECO:0007669"/>
    <property type="project" value="Ensembl"/>
</dbReference>
<dbReference type="GO" id="GO:0090090">
    <property type="term" value="P:negative regulation of canonical Wnt signaling pathway"/>
    <property type="evidence" value="ECO:0000314"/>
    <property type="project" value="BHF-UCL"/>
</dbReference>
<dbReference type="GO" id="GO:0072201">
    <property type="term" value="P:negative regulation of mesenchymal cell proliferation"/>
    <property type="evidence" value="ECO:0000315"/>
    <property type="project" value="BHF-UCL"/>
</dbReference>
<dbReference type="GO" id="GO:0032091">
    <property type="term" value="P:negative regulation of protein binding"/>
    <property type="evidence" value="ECO:0000314"/>
    <property type="project" value="BHF-UCL"/>
</dbReference>
<dbReference type="GO" id="GO:0031333">
    <property type="term" value="P:negative regulation of protein-containing complex assembly"/>
    <property type="evidence" value="ECO:0000314"/>
    <property type="project" value="BHF-UCL"/>
</dbReference>
<dbReference type="GO" id="GO:0048662">
    <property type="term" value="P:negative regulation of smooth muscle cell proliferation"/>
    <property type="evidence" value="ECO:0007669"/>
    <property type="project" value="Ensembl"/>
</dbReference>
<dbReference type="GO" id="GO:0000122">
    <property type="term" value="P:negative regulation of transcription by RNA polymerase II"/>
    <property type="evidence" value="ECO:0000314"/>
    <property type="project" value="BHF-UCL"/>
</dbReference>
<dbReference type="GO" id="GO:0060633">
    <property type="term" value="P:negative regulation of transcription initiation by RNA polymerase II"/>
    <property type="evidence" value="ECO:0000314"/>
    <property type="project" value="BHF-UCL"/>
</dbReference>
<dbReference type="GO" id="GO:0030178">
    <property type="term" value="P:negative regulation of Wnt signaling pathway"/>
    <property type="evidence" value="ECO:0000318"/>
    <property type="project" value="GO_Central"/>
</dbReference>
<dbReference type="GO" id="GO:0045657">
    <property type="term" value="P:positive regulation of monocyte differentiation"/>
    <property type="evidence" value="ECO:0000315"/>
    <property type="project" value="BHF-UCL"/>
</dbReference>
<dbReference type="GO" id="GO:0045669">
    <property type="term" value="P:positive regulation of osteoblast differentiation"/>
    <property type="evidence" value="ECO:0000315"/>
    <property type="project" value="BHF-UCL"/>
</dbReference>
<dbReference type="GO" id="GO:0002528">
    <property type="term" value="P:regulation of vascular permeability involved in acute inflammatory response"/>
    <property type="evidence" value="ECO:0000315"/>
    <property type="project" value="BHF-UCL"/>
</dbReference>
<dbReference type="GO" id="GO:0016055">
    <property type="term" value="P:Wnt signaling pathway"/>
    <property type="evidence" value="ECO:0007669"/>
    <property type="project" value="UniProtKB-KW"/>
</dbReference>
<dbReference type="FunFam" id="1.10.10.490:FF:000001">
    <property type="entry name" value="beta-catenin-interacting protein 1"/>
    <property type="match status" value="1"/>
</dbReference>
<dbReference type="Gene3D" id="1.10.10.490">
    <property type="entry name" value="Beta-catenin-interacting ICAT"/>
    <property type="match status" value="1"/>
</dbReference>
<dbReference type="IDEAL" id="IID00102"/>
<dbReference type="InterPro" id="IPR009428">
    <property type="entry name" value="ICAT_dom"/>
</dbReference>
<dbReference type="InterPro" id="IPR036911">
    <property type="entry name" value="ICAT_sf"/>
</dbReference>
<dbReference type="PANTHER" id="PTHR47142">
    <property type="entry name" value="BETA-CATENIN-INTERACTING PROTEIN 1"/>
    <property type="match status" value="1"/>
</dbReference>
<dbReference type="PANTHER" id="PTHR47142:SF1">
    <property type="entry name" value="BETA-CATENIN-INTERACTING PROTEIN 1"/>
    <property type="match status" value="1"/>
</dbReference>
<dbReference type="Pfam" id="PF06384">
    <property type="entry name" value="ICAT"/>
    <property type="match status" value="1"/>
</dbReference>
<dbReference type="SUPFAM" id="SSF81730">
    <property type="entry name" value="beta-catenin-interacting protein ICAT"/>
    <property type="match status" value="1"/>
</dbReference>
<organism>
    <name type="scientific">Homo sapiens</name>
    <name type="common">Human</name>
    <dbReference type="NCBI Taxonomy" id="9606"/>
    <lineage>
        <taxon>Eukaryota</taxon>
        <taxon>Metazoa</taxon>
        <taxon>Chordata</taxon>
        <taxon>Craniata</taxon>
        <taxon>Vertebrata</taxon>
        <taxon>Euteleostomi</taxon>
        <taxon>Mammalia</taxon>
        <taxon>Eutheria</taxon>
        <taxon>Euarchontoglires</taxon>
        <taxon>Primates</taxon>
        <taxon>Haplorrhini</taxon>
        <taxon>Catarrhini</taxon>
        <taxon>Hominidae</taxon>
        <taxon>Homo</taxon>
    </lineage>
</organism>
<reference key="1">
    <citation type="journal article" date="2000" name="Genes Dev.">
        <title>Inhibition of Wnt signaling by ICAT, a novel beta-catenin-interacting protein.</title>
        <authorList>
            <person name="Tago K."/>
            <person name="Nakamura T."/>
            <person name="Nishita M."/>
            <person name="Hyodo J."/>
            <person name="Nagai S."/>
            <person name="Murata Y."/>
            <person name="Adachi S."/>
            <person name="Ohwada S."/>
            <person name="Morishita Y."/>
            <person name="Shibuya H."/>
            <person name="Akiyama T."/>
        </authorList>
    </citation>
    <scope>NUCLEOTIDE SEQUENCE [MRNA]</scope>
</reference>
<reference key="2">
    <citation type="journal article" date="2006" name="Nature">
        <title>The DNA sequence and biological annotation of human chromosome 1.</title>
        <authorList>
            <person name="Gregory S.G."/>
            <person name="Barlow K.F."/>
            <person name="McLay K.E."/>
            <person name="Kaul R."/>
            <person name="Swarbreck D."/>
            <person name="Dunham A."/>
            <person name="Scott C.E."/>
            <person name="Howe K.L."/>
            <person name="Woodfine K."/>
            <person name="Spencer C.C.A."/>
            <person name="Jones M.C."/>
            <person name="Gillson C."/>
            <person name="Searle S."/>
            <person name="Zhou Y."/>
            <person name="Kokocinski F."/>
            <person name="McDonald L."/>
            <person name="Evans R."/>
            <person name="Phillips K."/>
            <person name="Atkinson A."/>
            <person name="Cooper R."/>
            <person name="Jones C."/>
            <person name="Hall R.E."/>
            <person name="Andrews T.D."/>
            <person name="Lloyd C."/>
            <person name="Ainscough R."/>
            <person name="Almeida J.P."/>
            <person name="Ambrose K.D."/>
            <person name="Anderson F."/>
            <person name="Andrew R.W."/>
            <person name="Ashwell R.I.S."/>
            <person name="Aubin K."/>
            <person name="Babbage A.K."/>
            <person name="Bagguley C.L."/>
            <person name="Bailey J."/>
            <person name="Beasley H."/>
            <person name="Bethel G."/>
            <person name="Bird C.P."/>
            <person name="Bray-Allen S."/>
            <person name="Brown J.Y."/>
            <person name="Brown A.J."/>
            <person name="Buckley D."/>
            <person name="Burton J."/>
            <person name="Bye J."/>
            <person name="Carder C."/>
            <person name="Chapman J.C."/>
            <person name="Clark S.Y."/>
            <person name="Clarke G."/>
            <person name="Clee C."/>
            <person name="Cobley V."/>
            <person name="Collier R.E."/>
            <person name="Corby N."/>
            <person name="Coville G.J."/>
            <person name="Davies J."/>
            <person name="Deadman R."/>
            <person name="Dunn M."/>
            <person name="Earthrowl M."/>
            <person name="Ellington A.G."/>
            <person name="Errington H."/>
            <person name="Frankish A."/>
            <person name="Frankland J."/>
            <person name="French L."/>
            <person name="Garner P."/>
            <person name="Garnett J."/>
            <person name="Gay L."/>
            <person name="Ghori M.R.J."/>
            <person name="Gibson R."/>
            <person name="Gilby L.M."/>
            <person name="Gillett W."/>
            <person name="Glithero R.J."/>
            <person name="Grafham D.V."/>
            <person name="Griffiths C."/>
            <person name="Griffiths-Jones S."/>
            <person name="Grocock R."/>
            <person name="Hammond S."/>
            <person name="Harrison E.S.I."/>
            <person name="Hart E."/>
            <person name="Haugen E."/>
            <person name="Heath P.D."/>
            <person name="Holmes S."/>
            <person name="Holt K."/>
            <person name="Howden P.J."/>
            <person name="Hunt A.R."/>
            <person name="Hunt S.E."/>
            <person name="Hunter G."/>
            <person name="Isherwood J."/>
            <person name="James R."/>
            <person name="Johnson C."/>
            <person name="Johnson D."/>
            <person name="Joy A."/>
            <person name="Kay M."/>
            <person name="Kershaw J.K."/>
            <person name="Kibukawa M."/>
            <person name="Kimberley A.M."/>
            <person name="King A."/>
            <person name="Knights A.J."/>
            <person name="Lad H."/>
            <person name="Laird G."/>
            <person name="Lawlor S."/>
            <person name="Leongamornlert D.A."/>
            <person name="Lloyd D.M."/>
            <person name="Loveland J."/>
            <person name="Lovell J."/>
            <person name="Lush M.J."/>
            <person name="Lyne R."/>
            <person name="Martin S."/>
            <person name="Mashreghi-Mohammadi M."/>
            <person name="Matthews L."/>
            <person name="Matthews N.S.W."/>
            <person name="McLaren S."/>
            <person name="Milne S."/>
            <person name="Mistry S."/>
            <person name="Moore M.J.F."/>
            <person name="Nickerson T."/>
            <person name="O'Dell C.N."/>
            <person name="Oliver K."/>
            <person name="Palmeiri A."/>
            <person name="Palmer S.A."/>
            <person name="Parker A."/>
            <person name="Patel D."/>
            <person name="Pearce A.V."/>
            <person name="Peck A.I."/>
            <person name="Pelan S."/>
            <person name="Phelps K."/>
            <person name="Phillimore B.J."/>
            <person name="Plumb R."/>
            <person name="Rajan J."/>
            <person name="Raymond C."/>
            <person name="Rouse G."/>
            <person name="Saenphimmachak C."/>
            <person name="Sehra H.K."/>
            <person name="Sheridan E."/>
            <person name="Shownkeen R."/>
            <person name="Sims S."/>
            <person name="Skuce C.D."/>
            <person name="Smith M."/>
            <person name="Steward C."/>
            <person name="Subramanian S."/>
            <person name="Sycamore N."/>
            <person name="Tracey A."/>
            <person name="Tromans A."/>
            <person name="Van Helmond Z."/>
            <person name="Wall M."/>
            <person name="Wallis J.M."/>
            <person name="White S."/>
            <person name="Whitehead S.L."/>
            <person name="Wilkinson J.E."/>
            <person name="Willey D.L."/>
            <person name="Williams H."/>
            <person name="Wilming L."/>
            <person name="Wray P.W."/>
            <person name="Wu Z."/>
            <person name="Coulson A."/>
            <person name="Vaudin M."/>
            <person name="Sulston J.E."/>
            <person name="Durbin R.M."/>
            <person name="Hubbard T."/>
            <person name="Wooster R."/>
            <person name="Dunham I."/>
            <person name="Carter N.P."/>
            <person name="McVean G."/>
            <person name="Ross M.T."/>
            <person name="Harrow J."/>
            <person name="Olson M.V."/>
            <person name="Beck S."/>
            <person name="Rogers J."/>
            <person name="Bentley D.R."/>
        </authorList>
    </citation>
    <scope>NUCLEOTIDE SEQUENCE [LARGE SCALE GENOMIC DNA]</scope>
</reference>
<reference key="3">
    <citation type="submission" date="2005-07" db="EMBL/GenBank/DDBJ databases">
        <authorList>
            <person name="Mural R.J."/>
            <person name="Istrail S."/>
            <person name="Sutton G."/>
            <person name="Florea L."/>
            <person name="Halpern A.L."/>
            <person name="Mobarry C.M."/>
            <person name="Lippert R."/>
            <person name="Walenz B."/>
            <person name="Shatkay H."/>
            <person name="Dew I."/>
            <person name="Miller J.R."/>
            <person name="Flanigan M.J."/>
            <person name="Edwards N.J."/>
            <person name="Bolanos R."/>
            <person name="Fasulo D."/>
            <person name="Halldorsson B.V."/>
            <person name="Hannenhalli S."/>
            <person name="Turner R."/>
            <person name="Yooseph S."/>
            <person name="Lu F."/>
            <person name="Nusskern D.R."/>
            <person name="Shue B.C."/>
            <person name="Zheng X.H."/>
            <person name="Zhong F."/>
            <person name="Delcher A.L."/>
            <person name="Huson D.H."/>
            <person name="Kravitz S.A."/>
            <person name="Mouchard L."/>
            <person name="Reinert K."/>
            <person name="Remington K.A."/>
            <person name="Clark A.G."/>
            <person name="Waterman M.S."/>
            <person name="Eichler E.E."/>
            <person name="Adams M.D."/>
            <person name="Hunkapiller M.W."/>
            <person name="Myers E.W."/>
            <person name="Venter J.C."/>
        </authorList>
    </citation>
    <scope>NUCLEOTIDE SEQUENCE [LARGE SCALE GENOMIC DNA]</scope>
</reference>
<reference key="4">
    <citation type="journal article" date="2004" name="Genome Res.">
        <title>The status, quality, and expansion of the NIH full-length cDNA project: the Mammalian Gene Collection (MGC).</title>
        <authorList>
            <consortium name="The MGC Project Team"/>
        </authorList>
    </citation>
    <scope>NUCLEOTIDE SEQUENCE [LARGE SCALE MRNA]</scope>
    <source>
        <tissue>Brain</tissue>
        <tissue>Lung</tissue>
    </source>
</reference>
<reference key="5">
    <citation type="journal article" date="2011" name="BMC Syst. Biol.">
        <title>Initial characterization of the human central proteome.</title>
        <authorList>
            <person name="Burkard T.R."/>
            <person name="Planyavsky M."/>
            <person name="Kaupe I."/>
            <person name="Breitwieser F.P."/>
            <person name="Buerckstuemmer T."/>
            <person name="Bennett K.L."/>
            <person name="Superti-Furga G."/>
            <person name="Colinge J."/>
        </authorList>
    </citation>
    <scope>IDENTIFICATION BY MASS SPECTROMETRY [LARGE SCALE ANALYSIS]</scope>
</reference>
<reference key="6">
    <citation type="journal article" date="2002" name="Mol. Cell">
        <title>The crystal structure of the beta-catenin/ICAT complex reveals the inhibitory mechanism of ICAT.</title>
        <authorList>
            <person name="Graham T.A."/>
            <person name="Clements W.K."/>
            <person name="Kimelman D."/>
            <person name="Xu W."/>
        </authorList>
    </citation>
    <scope>X-RAY CRYSTALLOGRAPHY (2.5 ANGSTROMS) IN COMPLEX WITH CTNNB1</scope>
    <scope>FUNCTION</scope>
</reference>
<reference key="7">
    <citation type="journal article" date="2002" name="Mol. Cell">
        <title>ICAT inhibits beta-catenin binding to Tcf/Lef-family transcription factors and the general coactivator p300 using independent structural modules.</title>
        <authorList>
            <person name="Daniels D.L."/>
            <person name="Weis W.I."/>
        </authorList>
    </citation>
    <scope>X-RAY CRYSTALLOGRAPHY (2.1 ANGSTROMS) IN COMPLEX WITH CTNNB1</scope>
</reference>
<name>CNBP1_HUMAN</name>
<accession>Q9NSA3</accession>
<accession>Q5T4V2</accession>
<gene>
    <name type="primary">CTNNBIP1</name>
    <name type="synonym">ICAT</name>
</gene>
<proteinExistence type="evidence at protein level"/>
<keyword id="KW-0002">3D-structure</keyword>
<keyword id="KW-0963">Cytoplasm</keyword>
<keyword id="KW-0539">Nucleus</keyword>
<keyword id="KW-0597">Phosphoprotein</keyword>
<keyword id="KW-1267">Proteomics identification</keyword>
<keyword id="KW-1185">Reference proteome</keyword>
<keyword id="KW-0879">Wnt signaling pathway</keyword>
<sequence length="81" mass="9170">MNREGAPGKSPEEMYIQQKVRVLLMLRKMGSNLTASEEEFLRTYAGVVNSQLSQLPPHSIDQGAEDVVMAFSRSETEDRRQ</sequence>
<comment type="function">
    <text evidence="3">Prevents the interaction between CTNNB1 and TCF family members, and acts as a negative regulator of the Wnt signaling pathway.</text>
</comment>
<comment type="subunit">
    <text evidence="3 4">Binds CTNNB1.</text>
</comment>
<comment type="interaction">
    <interactant intactId="EBI-747082">
        <id>Q9NSA3</id>
    </interactant>
    <interactant intactId="EBI-491549">
        <id>P35222</id>
        <label>CTNNB1</label>
    </interactant>
    <organismsDiffer>false</organismsDiffer>
    <experiments>16</experiments>
</comment>
<comment type="interaction">
    <interactant intactId="EBI-747082">
        <id>Q9NSA3</id>
    </interactant>
    <interactant intactId="EBI-747500">
        <id>Q9BRT9</id>
        <label>GINS4</label>
    </interactant>
    <organismsDiffer>false</organismsDiffer>
    <experiments>3</experiments>
</comment>
<comment type="interaction">
    <interactant intactId="EBI-747082">
        <id>Q9NSA3</id>
    </interactant>
    <interactant intactId="EBI-6509505">
        <id>Q0VD86</id>
        <label>INCA1</label>
    </interactant>
    <organismsDiffer>false</organismsDiffer>
    <experiments>3</experiments>
</comment>
<comment type="interaction">
    <interactant intactId="EBI-747082">
        <id>Q9NSA3</id>
    </interactant>
    <interactant intactId="EBI-702484">
        <id>P14923</id>
        <label>JUP</label>
    </interactant>
    <organismsDiffer>false</organismsDiffer>
    <experiments>5</experiments>
</comment>
<comment type="interaction">
    <interactant intactId="EBI-747082">
        <id>Q9NSA3</id>
    </interactant>
    <interactant intactId="EBI-11749135">
        <id>Q8IUG1</id>
        <label>KRTAP1-3</label>
    </interactant>
    <organismsDiffer>false</organismsDiffer>
    <experiments>3</experiments>
</comment>
<comment type="interaction">
    <interactant intactId="EBI-747082">
        <id>Q9NSA3</id>
    </interactant>
    <interactant intactId="EBI-10172290">
        <id>P60409</id>
        <label>KRTAP10-7</label>
    </interactant>
    <organismsDiffer>false</organismsDiffer>
    <experiments>3</experiments>
</comment>
<comment type="interaction">
    <interactant intactId="EBI-747082">
        <id>Q9NSA3</id>
    </interactant>
    <interactant intactId="EBI-3958099">
        <id>P26371</id>
        <label>KRTAP5-9</label>
    </interactant>
    <organismsDiffer>false</organismsDiffer>
    <experiments>3</experiments>
</comment>
<comment type="interaction">
    <interactant intactId="EBI-747082">
        <id>Q9NSA3</id>
    </interactant>
    <interactant intactId="EBI-11599933">
        <id>Q4VC12</id>
        <label>MSS51</label>
    </interactant>
    <organismsDiffer>false</organismsDiffer>
    <experiments>3</experiments>
</comment>
<comment type="interaction">
    <interactant intactId="EBI-747082">
        <id>Q9NSA3</id>
    </interactant>
    <interactant intactId="EBI-22310682">
        <id>P0DPK4</id>
        <label>NOTCH2NLC</label>
    </interactant>
    <organismsDiffer>false</organismsDiffer>
    <experiments>3</experiments>
</comment>
<comment type="interaction">
    <interactant intactId="EBI-747082">
        <id>Q9NSA3</id>
    </interactant>
    <interactant intactId="EBI-10181968">
        <id>Q7Z4N8</id>
        <label>P4HA3</label>
    </interactant>
    <organismsDiffer>false</organismsDiffer>
    <experiments>3</experiments>
</comment>
<comment type="interaction">
    <interactant intactId="EBI-747082">
        <id>Q9NSA3</id>
    </interactant>
    <interactant intactId="EBI-307352">
        <id>Q04864</id>
        <label>REL</label>
    </interactant>
    <organismsDiffer>false</organismsDiffer>
    <experiments>3</experiments>
</comment>
<comment type="interaction">
    <interactant intactId="EBI-747082">
        <id>Q9NSA3</id>
    </interactant>
    <interactant intactId="EBI-12041693">
        <id>Q86W54-2</id>
        <label>SPATA24</label>
    </interactant>
    <organismsDiffer>false</organismsDiffer>
    <experiments>3</experiments>
</comment>
<comment type="interaction">
    <interactant intactId="EBI-747082">
        <id>Q9NSA3</id>
    </interactant>
    <interactant intactId="EBI-739895">
        <id>Q8N6Y0</id>
        <label>USHBP1</label>
    </interactant>
    <organismsDiffer>false</organismsDiffer>
    <experiments>3</experiments>
</comment>
<comment type="interaction">
    <interactant intactId="EBI-747082">
        <id>Q9NSA3</id>
    </interactant>
    <interactant intactId="EBI-397872">
        <id>Q02248</id>
        <label>Ctnnb1</label>
    </interactant>
    <organismsDiffer>true</organismsDiffer>
    <experiments>7</experiments>
</comment>
<comment type="subcellular location">
    <subcellularLocation>
        <location evidence="1">Cytoplasm</location>
    </subcellularLocation>
    <subcellularLocation>
        <location evidence="1">Nucleus</location>
    </subcellularLocation>
</comment>
<comment type="similarity">
    <text evidence="5">Belongs to the CTNNBIP1 family.</text>
</comment>
<evidence type="ECO:0000250" key="1"/>
<evidence type="ECO:0000250" key="2">
    <source>
        <dbReference type="UniProtKB" id="Q9JJN6"/>
    </source>
</evidence>
<evidence type="ECO:0000269" key="3">
    <source>
    </source>
</evidence>
<evidence type="ECO:0000269" key="4">
    <source>
    </source>
</evidence>
<evidence type="ECO:0000305" key="5"/>
<evidence type="ECO:0007829" key="6">
    <source>
        <dbReference type="PDB" id="1M1E"/>
    </source>
</evidence>